<comment type="function">
    <text evidence="1">One of several proteins that assist in the late maturation steps of the functional core of the 30S ribosomal subunit. Associates with free 30S ribosomal subunits (but not with 30S subunits that are part of 70S ribosomes or polysomes). Required for efficient processing of 16S rRNA. May interact with the 5'-terminal helix region of 16S rRNA.</text>
</comment>
<comment type="subunit">
    <text evidence="1">Monomer. Binds 30S ribosomal subunits, but not 50S ribosomal subunits or 70S ribosomes.</text>
</comment>
<comment type="subcellular location">
    <subcellularLocation>
        <location evidence="1">Cytoplasm</location>
    </subcellularLocation>
</comment>
<comment type="similarity">
    <text evidence="1">Belongs to the RbfA family.</text>
</comment>
<name>RBFA_SALPC</name>
<feature type="chain" id="PRO_1000116213" description="Ribosome-binding factor A">
    <location>
        <begin position="1"/>
        <end position="133"/>
    </location>
</feature>
<keyword id="KW-0963">Cytoplasm</keyword>
<keyword id="KW-0690">Ribosome biogenesis</keyword>
<organism>
    <name type="scientific">Salmonella paratyphi C (strain RKS4594)</name>
    <dbReference type="NCBI Taxonomy" id="476213"/>
    <lineage>
        <taxon>Bacteria</taxon>
        <taxon>Pseudomonadati</taxon>
        <taxon>Pseudomonadota</taxon>
        <taxon>Gammaproteobacteria</taxon>
        <taxon>Enterobacterales</taxon>
        <taxon>Enterobacteriaceae</taxon>
        <taxon>Salmonella</taxon>
    </lineage>
</organism>
<protein>
    <recommendedName>
        <fullName evidence="1">Ribosome-binding factor A</fullName>
    </recommendedName>
</protein>
<reference key="1">
    <citation type="journal article" date="2009" name="PLoS ONE">
        <title>Salmonella paratyphi C: genetic divergence from Salmonella choleraesuis and pathogenic convergence with Salmonella typhi.</title>
        <authorList>
            <person name="Liu W.-Q."/>
            <person name="Feng Y."/>
            <person name="Wang Y."/>
            <person name="Zou Q.-H."/>
            <person name="Chen F."/>
            <person name="Guo J.-T."/>
            <person name="Peng Y.-H."/>
            <person name="Jin Y."/>
            <person name="Li Y.-G."/>
            <person name="Hu S.-N."/>
            <person name="Johnston R.N."/>
            <person name="Liu G.-R."/>
            <person name="Liu S.-L."/>
        </authorList>
    </citation>
    <scope>NUCLEOTIDE SEQUENCE [LARGE SCALE GENOMIC DNA]</scope>
    <source>
        <strain>RKS4594</strain>
    </source>
</reference>
<accession>C0PZ53</accession>
<dbReference type="EMBL" id="CP000857">
    <property type="protein sequence ID" value="ACN47441.1"/>
    <property type="molecule type" value="Genomic_DNA"/>
</dbReference>
<dbReference type="RefSeq" id="WP_001040208.1">
    <property type="nucleotide sequence ID" value="NC_012125.1"/>
</dbReference>
<dbReference type="SMR" id="C0PZ53"/>
<dbReference type="KEGG" id="sei:SPC_3356"/>
<dbReference type="HOGENOM" id="CLU_089475_5_0_6"/>
<dbReference type="Proteomes" id="UP000001599">
    <property type="component" value="Chromosome"/>
</dbReference>
<dbReference type="GO" id="GO:0005829">
    <property type="term" value="C:cytosol"/>
    <property type="evidence" value="ECO:0007669"/>
    <property type="project" value="TreeGrafter"/>
</dbReference>
<dbReference type="GO" id="GO:0043024">
    <property type="term" value="F:ribosomal small subunit binding"/>
    <property type="evidence" value="ECO:0007669"/>
    <property type="project" value="TreeGrafter"/>
</dbReference>
<dbReference type="GO" id="GO:0030490">
    <property type="term" value="P:maturation of SSU-rRNA"/>
    <property type="evidence" value="ECO:0007669"/>
    <property type="project" value="UniProtKB-UniRule"/>
</dbReference>
<dbReference type="FunFam" id="3.30.300.20:FF:000007">
    <property type="entry name" value="Ribosome-binding factor A"/>
    <property type="match status" value="1"/>
</dbReference>
<dbReference type="Gene3D" id="3.30.300.20">
    <property type="match status" value="1"/>
</dbReference>
<dbReference type="HAMAP" id="MF_00003">
    <property type="entry name" value="RbfA"/>
    <property type="match status" value="1"/>
</dbReference>
<dbReference type="InterPro" id="IPR015946">
    <property type="entry name" value="KH_dom-like_a/b"/>
</dbReference>
<dbReference type="InterPro" id="IPR000238">
    <property type="entry name" value="RbfA"/>
</dbReference>
<dbReference type="InterPro" id="IPR023799">
    <property type="entry name" value="RbfA_dom_sf"/>
</dbReference>
<dbReference type="InterPro" id="IPR020053">
    <property type="entry name" value="Ribosome-bd_factorA_CS"/>
</dbReference>
<dbReference type="NCBIfam" id="TIGR00082">
    <property type="entry name" value="rbfA"/>
    <property type="match status" value="1"/>
</dbReference>
<dbReference type="PANTHER" id="PTHR33515">
    <property type="entry name" value="RIBOSOME-BINDING FACTOR A, CHLOROPLASTIC-RELATED"/>
    <property type="match status" value="1"/>
</dbReference>
<dbReference type="PANTHER" id="PTHR33515:SF1">
    <property type="entry name" value="RIBOSOME-BINDING FACTOR A, CHLOROPLASTIC-RELATED"/>
    <property type="match status" value="1"/>
</dbReference>
<dbReference type="Pfam" id="PF02033">
    <property type="entry name" value="RBFA"/>
    <property type="match status" value="1"/>
</dbReference>
<dbReference type="SUPFAM" id="SSF89919">
    <property type="entry name" value="Ribosome-binding factor A, RbfA"/>
    <property type="match status" value="1"/>
</dbReference>
<dbReference type="PROSITE" id="PS01319">
    <property type="entry name" value="RBFA"/>
    <property type="match status" value="1"/>
</dbReference>
<proteinExistence type="inferred from homology"/>
<sequence length="133" mass="15150">MAKEFGRPQRVAQEMQKEIALILQREIKDPRVGMMTTVSGVEMSRDLAYAKVFVTFLNDQDEAAVKNGIKALQEASGFIRSLLGKAMRLRIVPELTFFYDNSLVEGMRMSNLVTNVVKHDEERRVNPDDSKED</sequence>
<evidence type="ECO:0000255" key="1">
    <source>
        <dbReference type="HAMAP-Rule" id="MF_00003"/>
    </source>
</evidence>
<gene>
    <name evidence="1" type="primary">rbfA</name>
    <name type="ordered locus">SPC_3356</name>
</gene>